<organism>
    <name type="scientific">Rattus norvegicus</name>
    <name type="common">Rat</name>
    <dbReference type="NCBI Taxonomy" id="10116"/>
    <lineage>
        <taxon>Eukaryota</taxon>
        <taxon>Metazoa</taxon>
        <taxon>Chordata</taxon>
        <taxon>Craniata</taxon>
        <taxon>Vertebrata</taxon>
        <taxon>Euteleostomi</taxon>
        <taxon>Mammalia</taxon>
        <taxon>Eutheria</taxon>
        <taxon>Euarchontoglires</taxon>
        <taxon>Glires</taxon>
        <taxon>Rodentia</taxon>
        <taxon>Myomorpha</taxon>
        <taxon>Muroidea</taxon>
        <taxon>Muridae</taxon>
        <taxon>Murinae</taxon>
        <taxon>Rattus</taxon>
    </lineage>
</organism>
<name>NDUS4_RAT</name>
<gene>
    <name type="primary">Ndufs4</name>
</gene>
<accession>Q5XIF3</accession>
<accession>A1L111</accession>
<sequence length="175" mass="19741">MAAVSMSVSLRQALLRQRAVATAAVSVCRVPSRLLNTSTWKLADGQTRDTQLITVDEKLDVTPLTGVPEEHIKTRKVRIFVPARNNMQSGVNNTKKWKMEFDTRERWENPLMGWASTADPLSNMVLTFSAKEDAVAFAEKHGWSYDVEGRKVPKPKSKSYGANFSWNKRTRVSTK</sequence>
<feature type="transit peptide" description="Mitochondrion" evidence="1">
    <location>
        <begin position="1"/>
        <end position="42"/>
    </location>
</feature>
<feature type="chain" id="PRO_0000250709" description="NADH dehydrogenase [ubiquinone] iron-sulfur protein 4, mitochondrial">
    <location>
        <begin position="43"/>
        <end position="175"/>
    </location>
</feature>
<feature type="region of interest" description="Disordered" evidence="3">
    <location>
        <begin position="152"/>
        <end position="175"/>
    </location>
</feature>
<feature type="modified residue" description="Phosphoserine" evidence="2">
    <location>
        <position position="173"/>
    </location>
</feature>
<comment type="function">
    <text evidence="2">Accessory subunit of the mitochondrial membrane respiratory chain NADH dehydrogenase (Complex I), that is believed not to be involved in catalysis. Complex I functions in the transfer of electrons from NADH to the respiratory chain. The immediate electron acceptor for the enzyme is believed to be ubiquinone.</text>
</comment>
<comment type="subunit">
    <text evidence="2">Mammalian complex I is composed of 45 different subunits. This is a component of the iron-sulfur (IP) fragment of the enzyme. Interacts with BCAP31 and TOMM40; the interaction mediates its translocation to the mitochondria; the interaction with BCAP31 is direct.</text>
</comment>
<comment type="subcellular location">
    <subcellularLocation>
        <location evidence="2">Mitochondrion inner membrane</location>
        <topology evidence="2">Peripheral membrane protein</topology>
        <orientation evidence="2">Matrix side</orientation>
    </subcellularLocation>
    <text evidence="2">The interaction with BCAP31 mediates mitochondria localization.</text>
</comment>
<comment type="similarity">
    <text evidence="4">Belongs to the complex I NDUFS4 subunit family.</text>
</comment>
<keyword id="KW-0903">Direct protein sequencing</keyword>
<keyword id="KW-0249">Electron transport</keyword>
<keyword id="KW-0472">Membrane</keyword>
<keyword id="KW-0496">Mitochondrion</keyword>
<keyword id="KW-0999">Mitochondrion inner membrane</keyword>
<keyword id="KW-0597">Phosphoprotein</keyword>
<keyword id="KW-1185">Reference proteome</keyword>
<keyword id="KW-0679">Respiratory chain</keyword>
<keyword id="KW-0809">Transit peptide</keyword>
<keyword id="KW-0813">Transport</keyword>
<reference key="1">
    <citation type="journal article" date="2004" name="Genome Res.">
        <title>The status, quality, and expansion of the NIH full-length cDNA project: the Mammalian Gene Collection (MGC).</title>
        <authorList>
            <consortium name="The MGC Project Team"/>
        </authorList>
    </citation>
    <scope>NUCLEOTIDE SEQUENCE [LARGE SCALE MRNA]</scope>
    <source>
        <tissue>Heart</tissue>
    </source>
</reference>
<reference key="2">
    <citation type="submission" date="2007-07" db="UniProtKB">
        <authorList>
            <person name="Lubec G."/>
            <person name="Kang S.U."/>
        </authorList>
    </citation>
    <scope>PROTEIN SEQUENCE OF 49-58</scope>
    <scope>IDENTIFICATION BY MASS SPECTROMETRY</scope>
    <source>
        <strain>Sprague-Dawley</strain>
        <tissue>Brain</tissue>
    </source>
</reference>
<proteinExistence type="evidence at protein level"/>
<dbReference type="EMBL" id="BC083729">
    <property type="protein sequence ID" value="AAH83729.1"/>
    <property type="molecule type" value="mRNA"/>
</dbReference>
<dbReference type="EMBL" id="BC127458">
    <property type="protein sequence ID" value="AAI27459.1"/>
    <property type="molecule type" value="mRNA"/>
</dbReference>
<dbReference type="RefSeq" id="NP_001020317.1">
    <property type="nucleotide sequence ID" value="NM_001025146.1"/>
</dbReference>
<dbReference type="SMR" id="Q5XIF3"/>
<dbReference type="BioGRID" id="270838">
    <property type="interactions" value="2"/>
</dbReference>
<dbReference type="FunCoup" id="Q5XIF3">
    <property type="interactions" value="2445"/>
</dbReference>
<dbReference type="STRING" id="10116.ENSRNOP00000015217"/>
<dbReference type="GlyGen" id="Q5XIF3">
    <property type="glycosylation" value="1 site, 1 O-linked glycan (1 site)"/>
</dbReference>
<dbReference type="iPTMnet" id="Q5XIF3"/>
<dbReference type="PhosphoSitePlus" id="Q5XIF3"/>
<dbReference type="SwissPalm" id="Q5XIF3"/>
<dbReference type="PaxDb" id="10116-ENSRNOP00000015217"/>
<dbReference type="Ensembl" id="ENSRNOT00000015217.6">
    <property type="protein sequence ID" value="ENSRNOP00000015217.3"/>
    <property type="gene ID" value="ENSRNOG00000011383.6"/>
</dbReference>
<dbReference type="GeneID" id="499529"/>
<dbReference type="KEGG" id="rno:499529"/>
<dbReference type="AGR" id="RGD:1594380"/>
<dbReference type="CTD" id="4724"/>
<dbReference type="RGD" id="1594380">
    <property type="gene designation" value="Ndufs4"/>
</dbReference>
<dbReference type="eggNOG" id="KOG3389">
    <property type="taxonomic scope" value="Eukaryota"/>
</dbReference>
<dbReference type="GeneTree" id="ENSGT00390000013835"/>
<dbReference type="HOGENOM" id="CLU_077196_3_0_1"/>
<dbReference type="InParanoid" id="Q5XIF3"/>
<dbReference type="OMA" id="GTIMKFD"/>
<dbReference type="OrthoDB" id="68616at9989"/>
<dbReference type="PhylomeDB" id="Q5XIF3"/>
<dbReference type="TreeFam" id="TF105619"/>
<dbReference type="Reactome" id="R-RNO-611105">
    <property type="pathway name" value="Respiratory electron transport"/>
</dbReference>
<dbReference type="Reactome" id="R-RNO-6799198">
    <property type="pathway name" value="Complex I biogenesis"/>
</dbReference>
<dbReference type="PRO" id="PR:Q5XIF3"/>
<dbReference type="Proteomes" id="UP000002494">
    <property type="component" value="Chromosome 2"/>
</dbReference>
<dbReference type="Bgee" id="ENSRNOG00000011383">
    <property type="expression patterns" value="Expressed in heart and 20 other cell types or tissues"/>
</dbReference>
<dbReference type="GO" id="GO:0005743">
    <property type="term" value="C:mitochondrial inner membrane"/>
    <property type="evidence" value="ECO:0000266"/>
    <property type="project" value="RGD"/>
</dbReference>
<dbReference type="GO" id="GO:0005739">
    <property type="term" value="C:mitochondrion"/>
    <property type="evidence" value="ECO:0000266"/>
    <property type="project" value="RGD"/>
</dbReference>
<dbReference type="GO" id="GO:0045271">
    <property type="term" value="C:respiratory chain complex I"/>
    <property type="evidence" value="ECO:0000266"/>
    <property type="project" value="RGD"/>
</dbReference>
<dbReference type="GO" id="GO:0008137">
    <property type="term" value="F:NADH dehydrogenase (ubiquinone) activity"/>
    <property type="evidence" value="ECO:0000266"/>
    <property type="project" value="RGD"/>
</dbReference>
<dbReference type="GO" id="GO:0030534">
    <property type="term" value="P:adult behavior"/>
    <property type="evidence" value="ECO:0000266"/>
    <property type="project" value="RGD"/>
</dbReference>
<dbReference type="GO" id="GO:0007628">
    <property type="term" value="P:adult walking behavior"/>
    <property type="evidence" value="ECO:0000266"/>
    <property type="project" value="RGD"/>
</dbReference>
<dbReference type="GO" id="GO:0007420">
    <property type="term" value="P:brain development"/>
    <property type="evidence" value="ECO:0000266"/>
    <property type="project" value="RGD"/>
</dbReference>
<dbReference type="GO" id="GO:0071453">
    <property type="term" value="P:cellular response to oxygen levels"/>
    <property type="evidence" value="ECO:0000266"/>
    <property type="project" value="RGD"/>
</dbReference>
<dbReference type="GO" id="GO:0050890">
    <property type="term" value="P:cognition"/>
    <property type="evidence" value="ECO:0000266"/>
    <property type="project" value="RGD"/>
</dbReference>
<dbReference type="GO" id="GO:0042417">
    <property type="term" value="P:dopamine metabolic process"/>
    <property type="evidence" value="ECO:0000266"/>
    <property type="project" value="RGD"/>
</dbReference>
<dbReference type="GO" id="GO:0006954">
    <property type="term" value="P:inflammatory response"/>
    <property type="evidence" value="ECO:0000266"/>
    <property type="project" value="RGD"/>
</dbReference>
<dbReference type="GO" id="GO:0045087">
    <property type="term" value="P:innate immune response"/>
    <property type="evidence" value="ECO:0000266"/>
    <property type="project" value="RGD"/>
</dbReference>
<dbReference type="GO" id="GO:0032981">
    <property type="term" value="P:mitochondrial respiratory chain complex I assembly"/>
    <property type="evidence" value="ECO:0000266"/>
    <property type="project" value="RGD"/>
</dbReference>
<dbReference type="GO" id="GO:0051402">
    <property type="term" value="P:neuron apoptotic process"/>
    <property type="evidence" value="ECO:0000266"/>
    <property type="project" value="RGD"/>
</dbReference>
<dbReference type="GO" id="GO:0048666">
    <property type="term" value="P:neuron development"/>
    <property type="evidence" value="ECO:0000266"/>
    <property type="project" value="RGD"/>
</dbReference>
<dbReference type="GO" id="GO:0036343">
    <property type="term" value="P:psychomotor behavior"/>
    <property type="evidence" value="ECO:0000266"/>
    <property type="project" value="RGD"/>
</dbReference>
<dbReference type="GO" id="GO:0072593">
    <property type="term" value="P:reactive oxygen species metabolic process"/>
    <property type="evidence" value="ECO:0000266"/>
    <property type="project" value="RGD"/>
</dbReference>
<dbReference type="GO" id="GO:0051881">
    <property type="term" value="P:regulation of mitochondrial membrane potential"/>
    <property type="evidence" value="ECO:0000266"/>
    <property type="project" value="RGD"/>
</dbReference>
<dbReference type="GO" id="GO:0022904">
    <property type="term" value="P:respiratory electron transport chain"/>
    <property type="evidence" value="ECO:0000266"/>
    <property type="project" value="RGD"/>
</dbReference>
<dbReference type="GO" id="GO:0003016">
    <property type="term" value="P:respiratory system process"/>
    <property type="evidence" value="ECO:0000266"/>
    <property type="project" value="RGD"/>
</dbReference>
<dbReference type="GO" id="GO:0051591">
    <property type="term" value="P:response to cAMP"/>
    <property type="evidence" value="ECO:0000266"/>
    <property type="project" value="RGD"/>
</dbReference>
<dbReference type="GO" id="GO:0014876">
    <property type="term" value="P:response to injury involved in regulation of muscle adaptation"/>
    <property type="evidence" value="ECO:0000266"/>
    <property type="project" value="RGD"/>
</dbReference>
<dbReference type="GO" id="GO:0007605">
    <property type="term" value="P:sensory perception of sound"/>
    <property type="evidence" value="ECO:0000266"/>
    <property type="project" value="RGD"/>
</dbReference>
<dbReference type="GO" id="GO:0007601">
    <property type="term" value="P:visual perception"/>
    <property type="evidence" value="ECO:0000266"/>
    <property type="project" value="RGD"/>
</dbReference>
<dbReference type="FunFam" id="3.30.160.190:FF:000001">
    <property type="entry name" value="NADH-ubiquinone oxidoreductase 21 kDa subunit mitochondrial"/>
    <property type="match status" value="1"/>
</dbReference>
<dbReference type="Gene3D" id="3.30.160.190">
    <property type="entry name" value="atu1810 like domain"/>
    <property type="match status" value="1"/>
</dbReference>
<dbReference type="InterPro" id="IPR006885">
    <property type="entry name" value="NADH_UbQ_FeS_4_mit-like"/>
</dbReference>
<dbReference type="InterPro" id="IPR038532">
    <property type="entry name" value="NDUFS4-like_sf"/>
</dbReference>
<dbReference type="PANTHER" id="PTHR12219:SF28">
    <property type="entry name" value="NADH DEHYDROGENASE [UBIQUINONE] IRON-SULFUR PROTEIN 4, MITOCHONDRIAL"/>
    <property type="match status" value="1"/>
</dbReference>
<dbReference type="PANTHER" id="PTHR12219">
    <property type="entry name" value="NADH-UBIQUINONE OXIDOREDUCTASE"/>
    <property type="match status" value="1"/>
</dbReference>
<dbReference type="Pfam" id="PF04800">
    <property type="entry name" value="NDUS4"/>
    <property type="match status" value="1"/>
</dbReference>
<evidence type="ECO:0000250" key="1"/>
<evidence type="ECO:0000250" key="2">
    <source>
        <dbReference type="UniProtKB" id="O43181"/>
    </source>
</evidence>
<evidence type="ECO:0000256" key="3">
    <source>
        <dbReference type="SAM" id="MobiDB-lite"/>
    </source>
</evidence>
<evidence type="ECO:0000305" key="4"/>
<protein>
    <recommendedName>
        <fullName>NADH dehydrogenase [ubiquinone] iron-sulfur protein 4, mitochondrial</fullName>
    </recommendedName>
    <alternativeName>
        <fullName>Complex I-18 kDa</fullName>
        <shortName>CI-18 kDa</shortName>
    </alternativeName>
    <alternativeName>
        <fullName>NADH-ubiquinone oxidoreductase 18 kDa subunit</fullName>
    </alternativeName>
</protein>